<keyword id="KW-0963">Cytoplasm</keyword>
<keyword id="KW-1015">Disulfide bond</keyword>
<keyword id="KW-0676">Redox-active center</keyword>
<keyword id="KW-1185">Reference proteome</keyword>
<name>TXD17_DANRE</name>
<protein>
    <recommendedName>
        <fullName>Thioredoxin domain-containing protein 17</fullName>
    </recommendedName>
    <alternativeName>
        <fullName>Thioredoxin-like protein 5</fullName>
    </alternativeName>
</protein>
<comment type="function">
    <text evidence="1">Disulfide reductase. May participate in various redox reactions through the reversible oxidation of its active center dithiol to a disulfide and catalyze dithiol-disulfide exchange reactions. Has peroxidase activity and may contribute to the elimination of cellular hydrogen peroxide (By similarity).</text>
</comment>
<comment type="subcellular location">
    <subcellularLocation>
        <location evidence="1">Cytoplasm</location>
    </subcellularLocation>
</comment>
<comment type="similarity">
    <text evidence="4">Belongs to the thioredoxin family.</text>
</comment>
<reference key="1">
    <citation type="submission" date="2004-07" db="EMBL/GenBank/DDBJ databases">
        <authorList>
            <consortium name="NIH - Zebrafish Gene Collection (ZGC) project"/>
        </authorList>
    </citation>
    <scope>NUCLEOTIDE SEQUENCE [LARGE SCALE MRNA]</scope>
</reference>
<organism>
    <name type="scientific">Danio rerio</name>
    <name type="common">Zebrafish</name>
    <name type="synonym">Brachydanio rerio</name>
    <dbReference type="NCBI Taxonomy" id="7955"/>
    <lineage>
        <taxon>Eukaryota</taxon>
        <taxon>Metazoa</taxon>
        <taxon>Chordata</taxon>
        <taxon>Craniata</taxon>
        <taxon>Vertebrata</taxon>
        <taxon>Euteleostomi</taxon>
        <taxon>Actinopterygii</taxon>
        <taxon>Neopterygii</taxon>
        <taxon>Teleostei</taxon>
        <taxon>Ostariophysi</taxon>
        <taxon>Cypriniformes</taxon>
        <taxon>Danionidae</taxon>
        <taxon>Danioninae</taxon>
        <taxon>Danio</taxon>
    </lineage>
</organism>
<accession>Q6DBT3</accession>
<feature type="chain" id="PRO_0000120025" description="Thioredoxin domain-containing protein 17">
    <location>
        <begin position="1"/>
        <end position="123"/>
    </location>
</feature>
<feature type="domain" description="Thioredoxin" evidence="3">
    <location>
        <begin position="41"/>
        <end position="123"/>
    </location>
</feature>
<feature type="active site" description="Nucleophile" evidence="2">
    <location>
        <position position="43"/>
    </location>
</feature>
<feature type="active site" description="Nucleophile" evidence="2">
    <location>
        <position position="46"/>
    </location>
</feature>
<feature type="site" description="Contributes to redox potential value" evidence="2">
    <location>
        <position position="44"/>
    </location>
</feature>
<feature type="site" description="Contributes to redox potential value" evidence="2">
    <location>
        <position position="45"/>
    </location>
</feature>
<feature type="disulfide bond" description="Redox-active" evidence="2">
    <location>
        <begin position="43"/>
        <end position="46"/>
    </location>
</feature>
<evidence type="ECO:0000250" key="1"/>
<evidence type="ECO:0000250" key="2">
    <source>
        <dbReference type="UniProtKB" id="Q9BRA2"/>
    </source>
</evidence>
<evidence type="ECO:0000255" key="3"/>
<evidence type="ECO:0000305" key="4"/>
<gene>
    <name type="primary">txndc17</name>
    <name type="synonym">txnl5</name>
    <name type="ORF">zgc:91920</name>
</gene>
<dbReference type="EMBL" id="BC078373">
    <property type="protein sequence ID" value="AAH78373.1"/>
    <property type="molecule type" value="mRNA"/>
</dbReference>
<dbReference type="RefSeq" id="NP_001003456.1">
    <property type="nucleotide sequence ID" value="NM_001003456.1"/>
</dbReference>
<dbReference type="SMR" id="Q6DBT3"/>
<dbReference type="FunCoup" id="Q6DBT3">
    <property type="interactions" value="1817"/>
</dbReference>
<dbReference type="STRING" id="7955.ENSDARP00000075336"/>
<dbReference type="PaxDb" id="7955-ENSDARP00000075336"/>
<dbReference type="Ensembl" id="ENSDART00000080892">
    <property type="protein sequence ID" value="ENSDARP00000075336"/>
    <property type="gene ID" value="ENSDARG00000058079"/>
</dbReference>
<dbReference type="GeneID" id="445062"/>
<dbReference type="KEGG" id="dre:445062"/>
<dbReference type="AGR" id="ZFIN:ZDB-GENE-040801-193"/>
<dbReference type="CTD" id="84817"/>
<dbReference type="ZFIN" id="ZDB-GENE-040801-193">
    <property type="gene designation" value="txndc17"/>
</dbReference>
<dbReference type="eggNOG" id="KOG3425">
    <property type="taxonomic scope" value="Eukaryota"/>
</dbReference>
<dbReference type="HOGENOM" id="CLU_120161_0_1_1"/>
<dbReference type="InParanoid" id="Q6DBT3"/>
<dbReference type="OMA" id="PRDYWKN"/>
<dbReference type="OrthoDB" id="78947at2759"/>
<dbReference type="PhylomeDB" id="Q6DBT3"/>
<dbReference type="TreeFam" id="TF313854"/>
<dbReference type="PRO" id="PR:Q6DBT3"/>
<dbReference type="Proteomes" id="UP000000437">
    <property type="component" value="Chromosome 15"/>
</dbReference>
<dbReference type="Bgee" id="ENSDARG00000058079">
    <property type="expression patterns" value="Expressed in intestine and 23 other cell types or tissues"/>
</dbReference>
<dbReference type="ExpressionAtlas" id="Q6DBT3">
    <property type="expression patterns" value="baseline and differential"/>
</dbReference>
<dbReference type="GO" id="GO:0005829">
    <property type="term" value="C:cytosol"/>
    <property type="evidence" value="ECO:0000318"/>
    <property type="project" value="GO_Central"/>
</dbReference>
<dbReference type="GO" id="GO:0047134">
    <property type="term" value="F:protein-disulfide reductase [NAD(P)H] activity"/>
    <property type="evidence" value="ECO:0000318"/>
    <property type="project" value="GO_Central"/>
</dbReference>
<dbReference type="CDD" id="cd02952">
    <property type="entry name" value="TRP14_like"/>
    <property type="match status" value="1"/>
</dbReference>
<dbReference type="FunFam" id="3.40.30.10:FF:000124">
    <property type="entry name" value="Thioredoxin domain-containing 17"/>
    <property type="match status" value="1"/>
</dbReference>
<dbReference type="Gene3D" id="3.40.30.10">
    <property type="entry name" value="Glutaredoxin"/>
    <property type="match status" value="1"/>
</dbReference>
<dbReference type="InterPro" id="IPR036249">
    <property type="entry name" value="Thioredoxin-like_sf"/>
</dbReference>
<dbReference type="InterPro" id="IPR045108">
    <property type="entry name" value="TXNDC17-like"/>
</dbReference>
<dbReference type="InterPro" id="IPR010357">
    <property type="entry name" value="TXNDC17_dom"/>
</dbReference>
<dbReference type="PANTHER" id="PTHR12452">
    <property type="entry name" value="42-9-9 PROTEIN-RELATED"/>
    <property type="match status" value="1"/>
</dbReference>
<dbReference type="PANTHER" id="PTHR12452:SF0">
    <property type="entry name" value="THIOREDOXIN DOMAIN-CONTAINING PROTEIN 17"/>
    <property type="match status" value="1"/>
</dbReference>
<dbReference type="Pfam" id="PF06110">
    <property type="entry name" value="TXD17-like_Trx"/>
    <property type="match status" value="1"/>
</dbReference>
<dbReference type="SUPFAM" id="SSF52833">
    <property type="entry name" value="Thioredoxin-like"/>
    <property type="match status" value="1"/>
</dbReference>
<proteinExistence type="evidence at transcript level"/>
<sequence length="123" mass="14193">MSKYEEVAVHGYEEFCKAVSDRKGKEIFAYFSGDKDEHGKSWCPDCVKAEPVVRAELPHLPEGTVFIYCQVGDRPYWKDSNNDFKKTLKLTGVPTLLRYGTPQKLVEEECFKADLVRMMFTED</sequence>